<feature type="chain" id="PRO_0000346645" description="Cell division suppressor protein YneA">
    <location>
        <begin position="1"/>
        <end position="109"/>
    </location>
</feature>
<feature type="domain" description="LysM" evidence="2">
    <location>
        <begin position="39"/>
        <end position="90"/>
    </location>
</feature>
<name>YNEA_LISMO</name>
<proteinExistence type="inferred from homology"/>
<protein>
    <recommendedName>
        <fullName evidence="1">Cell division suppressor protein YneA</fullName>
    </recommendedName>
</protein>
<comment type="function">
    <text evidence="1">Inhibits cell division during the SOS response. Affects a later stage of the cell division protein assembly, after the assembly of the Z ring, by probably suppressing recruitment of FtsL and/or DivIC to the division machinery.</text>
</comment>
<comment type="subcellular location">
    <subcellularLocation>
        <location evidence="1">Cytoplasm</location>
    </subcellularLocation>
</comment>
<comment type="similarity">
    <text evidence="1">Belongs to the YneA family.</text>
</comment>
<sequence>MTLKLIWDKFYVSIIFVLTCIVLGIILMCTVVGGGSDYSEVNVNEGDSLWALADQYAGKSDMAKADFVSWVEKENNLSDGHVEAGDSVVIPVHKTKLLKSDSTIQLANQ</sequence>
<keyword id="KW-0131">Cell cycle</keyword>
<keyword id="KW-0132">Cell division</keyword>
<keyword id="KW-0963">Cytoplasm</keyword>
<keyword id="KW-0227">DNA damage</keyword>
<keyword id="KW-0234">DNA repair</keyword>
<keyword id="KW-1185">Reference proteome</keyword>
<keyword id="KW-0717">Septation</keyword>
<keyword id="KW-0742">SOS response</keyword>
<dbReference type="EMBL" id="AL591978">
    <property type="protein sequence ID" value="CAC99381.1"/>
    <property type="molecule type" value="Genomic_DNA"/>
</dbReference>
<dbReference type="PIR" id="AG1237">
    <property type="entry name" value="AG1237"/>
</dbReference>
<dbReference type="RefSeq" id="NP_464828.1">
    <property type="nucleotide sequence ID" value="NC_003210.1"/>
</dbReference>
<dbReference type="RefSeq" id="WP_003723439.1">
    <property type="nucleotide sequence ID" value="NZ_CP149495.1"/>
</dbReference>
<dbReference type="SMR" id="Q8Y7H6"/>
<dbReference type="STRING" id="169963.gene:17593960"/>
<dbReference type="PaxDb" id="169963-lmo1303"/>
<dbReference type="EnsemblBacteria" id="CAC99381">
    <property type="protein sequence ID" value="CAC99381"/>
    <property type="gene ID" value="CAC99381"/>
</dbReference>
<dbReference type="GeneID" id="987680"/>
<dbReference type="KEGG" id="lmo:lmo1303"/>
<dbReference type="PATRIC" id="fig|169963.11.peg.1339"/>
<dbReference type="eggNOG" id="COG1388">
    <property type="taxonomic scope" value="Bacteria"/>
</dbReference>
<dbReference type="HOGENOM" id="CLU_136034_4_0_9"/>
<dbReference type="OrthoDB" id="2679564at2"/>
<dbReference type="BioCyc" id="LMON169963:LMO1303-MONOMER"/>
<dbReference type="Proteomes" id="UP000000817">
    <property type="component" value="Chromosome"/>
</dbReference>
<dbReference type="GO" id="GO:0005737">
    <property type="term" value="C:cytoplasm"/>
    <property type="evidence" value="ECO:0007669"/>
    <property type="project" value="UniProtKB-SubCell"/>
</dbReference>
<dbReference type="GO" id="GO:0000917">
    <property type="term" value="P:division septum assembly"/>
    <property type="evidence" value="ECO:0007669"/>
    <property type="project" value="UniProtKB-KW"/>
</dbReference>
<dbReference type="GO" id="GO:0006281">
    <property type="term" value="P:DNA repair"/>
    <property type="evidence" value="ECO:0007669"/>
    <property type="project" value="UniProtKB-KW"/>
</dbReference>
<dbReference type="GO" id="GO:0051782">
    <property type="term" value="P:negative regulation of cell division"/>
    <property type="evidence" value="ECO:0007669"/>
    <property type="project" value="UniProtKB-UniRule"/>
</dbReference>
<dbReference type="GO" id="GO:0009432">
    <property type="term" value="P:SOS response"/>
    <property type="evidence" value="ECO:0000269"/>
    <property type="project" value="CollecTF"/>
</dbReference>
<dbReference type="Gene3D" id="3.10.350.10">
    <property type="entry name" value="LysM domain"/>
    <property type="match status" value="1"/>
</dbReference>
<dbReference type="HAMAP" id="MF_02014">
    <property type="entry name" value="YneA"/>
    <property type="match status" value="1"/>
</dbReference>
<dbReference type="InterPro" id="IPR022887">
    <property type="entry name" value="Cell_div_suppressor_YneA"/>
</dbReference>
<dbReference type="InterPro" id="IPR018392">
    <property type="entry name" value="LysM_dom"/>
</dbReference>
<dbReference type="InterPro" id="IPR036779">
    <property type="entry name" value="LysM_dom_sf"/>
</dbReference>
<dbReference type="NCBIfam" id="NF010723">
    <property type="entry name" value="PRK14125.1"/>
    <property type="match status" value="1"/>
</dbReference>
<dbReference type="Pfam" id="PF01476">
    <property type="entry name" value="LysM"/>
    <property type="match status" value="1"/>
</dbReference>
<dbReference type="PROSITE" id="PS51782">
    <property type="entry name" value="LYSM"/>
    <property type="match status" value="1"/>
</dbReference>
<gene>
    <name evidence="1" type="primary">yneA</name>
    <name type="ordered locus">lmo1303</name>
</gene>
<accession>Q8Y7H6</accession>
<evidence type="ECO:0000255" key="1">
    <source>
        <dbReference type="HAMAP-Rule" id="MF_02014"/>
    </source>
</evidence>
<evidence type="ECO:0000255" key="2">
    <source>
        <dbReference type="PROSITE-ProRule" id="PRU01118"/>
    </source>
</evidence>
<organism>
    <name type="scientific">Listeria monocytogenes serovar 1/2a (strain ATCC BAA-679 / EGD-e)</name>
    <dbReference type="NCBI Taxonomy" id="169963"/>
    <lineage>
        <taxon>Bacteria</taxon>
        <taxon>Bacillati</taxon>
        <taxon>Bacillota</taxon>
        <taxon>Bacilli</taxon>
        <taxon>Bacillales</taxon>
        <taxon>Listeriaceae</taxon>
        <taxon>Listeria</taxon>
    </lineage>
</organism>
<reference key="1">
    <citation type="journal article" date="2001" name="Science">
        <title>Comparative genomics of Listeria species.</title>
        <authorList>
            <person name="Glaser P."/>
            <person name="Frangeul L."/>
            <person name="Buchrieser C."/>
            <person name="Rusniok C."/>
            <person name="Amend A."/>
            <person name="Baquero F."/>
            <person name="Berche P."/>
            <person name="Bloecker H."/>
            <person name="Brandt P."/>
            <person name="Chakraborty T."/>
            <person name="Charbit A."/>
            <person name="Chetouani F."/>
            <person name="Couve E."/>
            <person name="de Daruvar A."/>
            <person name="Dehoux P."/>
            <person name="Domann E."/>
            <person name="Dominguez-Bernal G."/>
            <person name="Duchaud E."/>
            <person name="Durant L."/>
            <person name="Dussurget O."/>
            <person name="Entian K.-D."/>
            <person name="Fsihi H."/>
            <person name="Garcia-del Portillo F."/>
            <person name="Garrido P."/>
            <person name="Gautier L."/>
            <person name="Goebel W."/>
            <person name="Gomez-Lopez N."/>
            <person name="Hain T."/>
            <person name="Hauf J."/>
            <person name="Jackson D."/>
            <person name="Jones L.-M."/>
            <person name="Kaerst U."/>
            <person name="Kreft J."/>
            <person name="Kuhn M."/>
            <person name="Kunst F."/>
            <person name="Kurapkat G."/>
            <person name="Madueno E."/>
            <person name="Maitournam A."/>
            <person name="Mata Vicente J."/>
            <person name="Ng E."/>
            <person name="Nedjari H."/>
            <person name="Nordsiek G."/>
            <person name="Novella S."/>
            <person name="de Pablos B."/>
            <person name="Perez-Diaz J.-C."/>
            <person name="Purcell R."/>
            <person name="Remmel B."/>
            <person name="Rose M."/>
            <person name="Schlueter T."/>
            <person name="Simoes N."/>
            <person name="Tierrez A."/>
            <person name="Vazquez-Boland J.-A."/>
            <person name="Voss H."/>
            <person name="Wehland J."/>
            <person name="Cossart P."/>
        </authorList>
    </citation>
    <scope>NUCLEOTIDE SEQUENCE [LARGE SCALE GENOMIC DNA]</scope>
    <source>
        <strain>ATCC BAA-679 / EGD-e</strain>
    </source>
</reference>